<name>RS17_RHOBA</name>
<feature type="chain" id="PRO_0000233555" description="Small ribosomal subunit protein uS17">
    <location>
        <begin position="1"/>
        <end position="117"/>
    </location>
</feature>
<feature type="region of interest" description="Disordered" evidence="2">
    <location>
        <begin position="97"/>
        <end position="117"/>
    </location>
</feature>
<sequence length="117" mass="13026">MPKRVVAGIVTSDKMSKTRRVEIARLVKHPKYKKYIRRRTVCHVHDENNESGVGDKVEIIESEPLSKLKRWRLVRVLEKSTAVDVVALRAARKNAEAEGLAAAHAGEPETESAATDA</sequence>
<accession>Q7UN11</accession>
<organism>
    <name type="scientific">Rhodopirellula baltica (strain DSM 10527 / NCIMB 13988 / SH1)</name>
    <dbReference type="NCBI Taxonomy" id="243090"/>
    <lineage>
        <taxon>Bacteria</taxon>
        <taxon>Pseudomonadati</taxon>
        <taxon>Planctomycetota</taxon>
        <taxon>Planctomycetia</taxon>
        <taxon>Pirellulales</taxon>
        <taxon>Pirellulaceae</taxon>
        <taxon>Rhodopirellula</taxon>
    </lineage>
</organism>
<keyword id="KW-1185">Reference proteome</keyword>
<keyword id="KW-0687">Ribonucleoprotein</keyword>
<keyword id="KW-0689">Ribosomal protein</keyword>
<keyword id="KW-0694">RNA-binding</keyword>
<keyword id="KW-0699">rRNA-binding</keyword>
<proteinExistence type="inferred from homology"/>
<gene>
    <name evidence="1" type="primary">rpsQ</name>
    <name type="ordered locus">RB7849</name>
</gene>
<comment type="function">
    <text evidence="1">One of the primary rRNA binding proteins, it binds specifically to the 5'-end of 16S ribosomal RNA.</text>
</comment>
<comment type="subunit">
    <text evidence="1">Part of the 30S ribosomal subunit.</text>
</comment>
<comment type="similarity">
    <text evidence="1">Belongs to the universal ribosomal protein uS17 family.</text>
</comment>
<comment type="sequence caution" evidence="3">
    <conflict type="erroneous initiation">
        <sequence resource="EMBL-CDS" id="CAD75608"/>
    </conflict>
</comment>
<protein>
    <recommendedName>
        <fullName evidence="1">Small ribosomal subunit protein uS17</fullName>
    </recommendedName>
    <alternativeName>
        <fullName evidence="3">30S ribosomal protein S17</fullName>
    </alternativeName>
</protein>
<dbReference type="EMBL" id="BX294146">
    <property type="protein sequence ID" value="CAD75608.1"/>
    <property type="status" value="ALT_INIT"/>
    <property type="molecule type" value="Genomic_DNA"/>
</dbReference>
<dbReference type="RefSeq" id="NP_868061.1">
    <property type="nucleotide sequence ID" value="NC_005027.1"/>
</dbReference>
<dbReference type="SMR" id="Q7UN11"/>
<dbReference type="FunCoup" id="Q7UN11">
    <property type="interactions" value="402"/>
</dbReference>
<dbReference type="STRING" id="243090.RB7849"/>
<dbReference type="EnsemblBacteria" id="CAD75608">
    <property type="protein sequence ID" value="CAD75608"/>
    <property type="gene ID" value="RB7849"/>
</dbReference>
<dbReference type="KEGG" id="rba:RB7849"/>
<dbReference type="PATRIC" id="fig|243090.15.peg.3792"/>
<dbReference type="eggNOG" id="COG0186">
    <property type="taxonomic scope" value="Bacteria"/>
</dbReference>
<dbReference type="HOGENOM" id="CLU_073626_1_2_0"/>
<dbReference type="InParanoid" id="Q7UN11"/>
<dbReference type="OrthoDB" id="9811714at2"/>
<dbReference type="Proteomes" id="UP000001025">
    <property type="component" value="Chromosome"/>
</dbReference>
<dbReference type="GO" id="GO:0022627">
    <property type="term" value="C:cytosolic small ribosomal subunit"/>
    <property type="evidence" value="ECO:0000318"/>
    <property type="project" value="GO_Central"/>
</dbReference>
<dbReference type="GO" id="GO:0019843">
    <property type="term" value="F:rRNA binding"/>
    <property type="evidence" value="ECO:0007669"/>
    <property type="project" value="UniProtKB-UniRule"/>
</dbReference>
<dbReference type="GO" id="GO:0003735">
    <property type="term" value="F:structural constituent of ribosome"/>
    <property type="evidence" value="ECO:0000318"/>
    <property type="project" value="GO_Central"/>
</dbReference>
<dbReference type="GO" id="GO:0006412">
    <property type="term" value="P:translation"/>
    <property type="evidence" value="ECO:0007669"/>
    <property type="project" value="UniProtKB-UniRule"/>
</dbReference>
<dbReference type="CDD" id="cd00364">
    <property type="entry name" value="Ribosomal_uS17"/>
    <property type="match status" value="1"/>
</dbReference>
<dbReference type="Gene3D" id="2.40.50.140">
    <property type="entry name" value="Nucleic acid-binding proteins"/>
    <property type="match status" value="1"/>
</dbReference>
<dbReference type="HAMAP" id="MF_01345_B">
    <property type="entry name" value="Ribosomal_uS17_B"/>
    <property type="match status" value="1"/>
</dbReference>
<dbReference type="InterPro" id="IPR012340">
    <property type="entry name" value="NA-bd_OB-fold"/>
</dbReference>
<dbReference type="InterPro" id="IPR000266">
    <property type="entry name" value="Ribosomal_uS17"/>
</dbReference>
<dbReference type="InterPro" id="IPR019984">
    <property type="entry name" value="Ribosomal_uS17_bact/chlr"/>
</dbReference>
<dbReference type="NCBIfam" id="NF004123">
    <property type="entry name" value="PRK05610.1"/>
    <property type="match status" value="1"/>
</dbReference>
<dbReference type="NCBIfam" id="TIGR03635">
    <property type="entry name" value="uS17_bact"/>
    <property type="match status" value="1"/>
</dbReference>
<dbReference type="PANTHER" id="PTHR10744">
    <property type="entry name" value="40S RIBOSOMAL PROTEIN S11 FAMILY MEMBER"/>
    <property type="match status" value="1"/>
</dbReference>
<dbReference type="PANTHER" id="PTHR10744:SF1">
    <property type="entry name" value="SMALL RIBOSOMAL SUBUNIT PROTEIN US17M"/>
    <property type="match status" value="1"/>
</dbReference>
<dbReference type="Pfam" id="PF00366">
    <property type="entry name" value="Ribosomal_S17"/>
    <property type="match status" value="1"/>
</dbReference>
<dbReference type="PRINTS" id="PR00973">
    <property type="entry name" value="RIBOSOMALS17"/>
</dbReference>
<dbReference type="SUPFAM" id="SSF50249">
    <property type="entry name" value="Nucleic acid-binding proteins"/>
    <property type="match status" value="1"/>
</dbReference>
<reference key="1">
    <citation type="journal article" date="2003" name="Proc. Natl. Acad. Sci. U.S.A.">
        <title>Complete genome sequence of the marine planctomycete Pirellula sp. strain 1.</title>
        <authorList>
            <person name="Gloeckner F.O."/>
            <person name="Kube M."/>
            <person name="Bauer M."/>
            <person name="Teeling H."/>
            <person name="Lombardot T."/>
            <person name="Ludwig W."/>
            <person name="Gade D."/>
            <person name="Beck A."/>
            <person name="Borzym K."/>
            <person name="Heitmann K."/>
            <person name="Rabus R."/>
            <person name="Schlesner H."/>
            <person name="Amann R."/>
            <person name="Reinhardt R."/>
        </authorList>
    </citation>
    <scope>NUCLEOTIDE SEQUENCE [LARGE SCALE GENOMIC DNA]</scope>
    <source>
        <strain>DSM 10527 / NCIMB 13988 / SH1</strain>
    </source>
</reference>
<evidence type="ECO:0000255" key="1">
    <source>
        <dbReference type="HAMAP-Rule" id="MF_01345"/>
    </source>
</evidence>
<evidence type="ECO:0000256" key="2">
    <source>
        <dbReference type="SAM" id="MobiDB-lite"/>
    </source>
</evidence>
<evidence type="ECO:0000305" key="3"/>